<keyword id="KW-0963">Cytoplasm</keyword>
<keyword id="KW-0378">Hydrolase</keyword>
<keyword id="KW-0539">Nucleus</keyword>
<keyword id="KW-0904">Protein phosphatase</keyword>
<keyword id="KW-1185">Reference proteome</keyword>
<comment type="function">
    <text evidence="1 2">Dual specificity phosphatase able to dephosphorylate phosphotyrosine, phosphoserine and phosphothreonine residues within the same substrate, with a preference for phosphotyrosine as a substrate (By similarity). Involved in the modulation of AMPK and MAPK1/2 signaling pathways (By similarity).</text>
</comment>
<comment type="catalytic activity">
    <reaction evidence="1">
        <text>O-phospho-L-tyrosyl-[protein] + H2O = L-tyrosyl-[protein] + phosphate</text>
        <dbReference type="Rhea" id="RHEA:10684"/>
        <dbReference type="Rhea" id="RHEA-COMP:10136"/>
        <dbReference type="Rhea" id="RHEA-COMP:20101"/>
        <dbReference type="ChEBI" id="CHEBI:15377"/>
        <dbReference type="ChEBI" id="CHEBI:43474"/>
        <dbReference type="ChEBI" id="CHEBI:46858"/>
        <dbReference type="ChEBI" id="CHEBI:61978"/>
        <dbReference type="EC" id="3.1.3.48"/>
    </reaction>
</comment>
<comment type="catalytic activity">
    <reaction evidence="1">
        <text>O-phospho-L-seryl-[protein] + H2O = L-seryl-[protein] + phosphate</text>
        <dbReference type="Rhea" id="RHEA:20629"/>
        <dbReference type="Rhea" id="RHEA-COMP:9863"/>
        <dbReference type="Rhea" id="RHEA-COMP:11604"/>
        <dbReference type="ChEBI" id="CHEBI:15377"/>
        <dbReference type="ChEBI" id="CHEBI:29999"/>
        <dbReference type="ChEBI" id="CHEBI:43474"/>
        <dbReference type="ChEBI" id="CHEBI:83421"/>
        <dbReference type="EC" id="3.1.3.16"/>
    </reaction>
</comment>
<comment type="catalytic activity">
    <reaction evidence="1">
        <text>O-phospho-L-threonyl-[protein] + H2O = L-threonyl-[protein] + phosphate</text>
        <dbReference type="Rhea" id="RHEA:47004"/>
        <dbReference type="Rhea" id="RHEA-COMP:11060"/>
        <dbReference type="Rhea" id="RHEA-COMP:11605"/>
        <dbReference type="ChEBI" id="CHEBI:15377"/>
        <dbReference type="ChEBI" id="CHEBI:30013"/>
        <dbReference type="ChEBI" id="CHEBI:43474"/>
        <dbReference type="ChEBI" id="CHEBI:61977"/>
        <dbReference type="EC" id="3.1.3.16"/>
    </reaction>
</comment>
<comment type="subcellular location">
    <subcellularLocation>
        <location evidence="1">Cytoplasm</location>
    </subcellularLocation>
    <subcellularLocation>
        <location evidence="2">Nucleus</location>
    </subcellularLocation>
</comment>
<comment type="similarity">
    <text evidence="4">Belongs to the protein-tyrosine phosphatase family. Non-receptor class dual specificity subfamily.</text>
</comment>
<reference key="1">
    <citation type="journal article" date="2011" name="Nature">
        <title>The genome of the green anole lizard and a comparative analysis with birds and mammals.</title>
        <authorList>
            <person name="Alfoeldi J."/>
            <person name="Di Palma F."/>
            <person name="Grabherr M."/>
            <person name="Williams C."/>
            <person name="Kong L."/>
            <person name="Mauceli E."/>
            <person name="Russell P."/>
            <person name="Lowe C.B."/>
            <person name="Glor R.E."/>
            <person name="Jaffe J.D."/>
            <person name="Ray D.A."/>
            <person name="Boissinot S."/>
            <person name="Shedlock A.M."/>
            <person name="Botka C."/>
            <person name="Castoe T.A."/>
            <person name="Colbourne J.K."/>
            <person name="Fujita M.K."/>
            <person name="Moreno R.G."/>
            <person name="ten Hallers B.F."/>
            <person name="Haussler D."/>
            <person name="Heger A."/>
            <person name="Heiman D."/>
            <person name="Janes D.E."/>
            <person name="Johnson J."/>
            <person name="de Jong P.J."/>
            <person name="Koriabine M.Y."/>
            <person name="Lara M."/>
            <person name="Novick P.A."/>
            <person name="Organ C.L."/>
            <person name="Peach S.E."/>
            <person name="Poe S."/>
            <person name="Pollock D.D."/>
            <person name="de Queiroz K."/>
            <person name="Sanger T."/>
            <person name="Searle S."/>
            <person name="Smith J.D."/>
            <person name="Smith Z."/>
            <person name="Swofford R."/>
            <person name="Turner-Maier J."/>
            <person name="Wade J."/>
            <person name="Young S."/>
            <person name="Zadissa A."/>
            <person name="Edwards S.V."/>
            <person name="Glenn T.C."/>
            <person name="Schneider C.J."/>
            <person name="Losos J.B."/>
            <person name="Lander E.S."/>
            <person name="Breen M."/>
            <person name="Ponting C.P."/>
            <person name="Lindblad-Toh K."/>
        </authorList>
    </citation>
    <scope>NUCLEOTIDE SEQUENCE [LARGE SCALE GENOMIC DNA]</scope>
</reference>
<evidence type="ECO:0000250" key="1">
    <source>
        <dbReference type="UniProtKB" id="Q68J44"/>
    </source>
</evidence>
<evidence type="ECO:0000250" key="2">
    <source>
        <dbReference type="UniProtKB" id="Q8BK84"/>
    </source>
</evidence>
<evidence type="ECO:0000255" key="3">
    <source>
        <dbReference type="PROSITE-ProRule" id="PRU00160"/>
    </source>
</evidence>
<evidence type="ECO:0000305" key="4"/>
<gene>
    <name type="primary">DUSP29</name>
    <name type="synonym">DUPD1</name>
</gene>
<protein>
    <recommendedName>
        <fullName>Dual specificity phosphatase 29</fullName>
    </recommendedName>
    <alternativeName>
        <fullName>Dual specificity phosphatase DUPD1</fullName>
        <ecNumber evidence="1">3.1.3.16</ecNumber>
        <ecNumber evidence="1">3.1.3.48</ecNumber>
    </alternativeName>
</protein>
<name>DUS29_ANOCA</name>
<sequence>MSSTALKSGKISAYAAVKVDPDGDYCTPGAFDLERLFWKGSPKYTHVNEVWPNLYIGDEKTALDRYSLEKAGFTHILNAAHGRWNVDTGPEYYSDMNIEYHGVEADDLPTFNLSPFFYSAAEFIHTALQNETSKILVHCAMGRSRSAALVLAYLMIYKNMTVVDAIDQVLQHRCILPNRGFLKQLRELDIKLALERRDNMNGTNSSEKTGTSTETEI</sequence>
<dbReference type="EC" id="3.1.3.16" evidence="1"/>
<dbReference type="EC" id="3.1.3.48" evidence="1"/>
<dbReference type="EMBL" id="AAWZ01006385">
    <property type="status" value="NOT_ANNOTATED_CDS"/>
    <property type="molecule type" value="Genomic_DNA"/>
</dbReference>
<dbReference type="EMBL" id="AAWZ01006387">
    <property type="status" value="NOT_ANNOTATED_CDS"/>
    <property type="molecule type" value="Genomic_DNA"/>
</dbReference>
<dbReference type="SMR" id="P0C598"/>
<dbReference type="FunCoup" id="P0C598">
    <property type="interactions" value="31"/>
</dbReference>
<dbReference type="STRING" id="28377.ENSACAP00000008506"/>
<dbReference type="eggNOG" id="KOG1716">
    <property type="taxonomic scope" value="Eukaryota"/>
</dbReference>
<dbReference type="InParanoid" id="P0C598"/>
<dbReference type="Proteomes" id="UP000001646">
    <property type="component" value="Unplaced"/>
</dbReference>
<dbReference type="GO" id="GO:0005737">
    <property type="term" value="C:cytoplasm"/>
    <property type="evidence" value="ECO:0000250"/>
    <property type="project" value="UniProtKB"/>
</dbReference>
<dbReference type="GO" id="GO:0005634">
    <property type="term" value="C:nucleus"/>
    <property type="evidence" value="ECO:0000250"/>
    <property type="project" value="UniProtKB"/>
</dbReference>
<dbReference type="GO" id="GO:0033549">
    <property type="term" value="F:MAP kinase phosphatase activity"/>
    <property type="evidence" value="ECO:0000318"/>
    <property type="project" value="GO_Central"/>
</dbReference>
<dbReference type="GO" id="GO:0004722">
    <property type="term" value="F:protein serine/threonine phosphatase activity"/>
    <property type="evidence" value="ECO:0007669"/>
    <property type="project" value="UniProtKB-EC"/>
</dbReference>
<dbReference type="GO" id="GO:0004725">
    <property type="term" value="F:protein tyrosine phosphatase activity"/>
    <property type="evidence" value="ECO:0007669"/>
    <property type="project" value="UniProtKB-EC"/>
</dbReference>
<dbReference type="GO" id="GO:0008138">
    <property type="term" value="F:protein tyrosine/serine/threonine phosphatase activity"/>
    <property type="evidence" value="ECO:0000250"/>
    <property type="project" value="UniProtKB"/>
</dbReference>
<dbReference type="GO" id="GO:0043409">
    <property type="term" value="P:negative regulation of MAPK cascade"/>
    <property type="evidence" value="ECO:0000318"/>
    <property type="project" value="GO_Central"/>
</dbReference>
<dbReference type="GO" id="GO:0006470">
    <property type="term" value="P:protein dephosphorylation"/>
    <property type="evidence" value="ECO:0000250"/>
    <property type="project" value="UniProtKB"/>
</dbReference>
<dbReference type="CDD" id="cd14575">
    <property type="entry name" value="DUPD1"/>
    <property type="match status" value="1"/>
</dbReference>
<dbReference type="FunFam" id="3.90.190.10:FF:000037">
    <property type="entry name" value="dual specificity protein phosphatase 26"/>
    <property type="match status" value="1"/>
</dbReference>
<dbReference type="Gene3D" id="3.90.190.10">
    <property type="entry name" value="Protein tyrosine phosphatase superfamily"/>
    <property type="match status" value="1"/>
</dbReference>
<dbReference type="InterPro" id="IPR020405">
    <property type="entry name" value="Atypical_DUSP_subfamA"/>
</dbReference>
<dbReference type="InterPro" id="IPR000340">
    <property type="entry name" value="Dual-sp_phosphatase_cat-dom"/>
</dbReference>
<dbReference type="InterPro" id="IPR029021">
    <property type="entry name" value="Prot-tyrosine_phosphatase-like"/>
</dbReference>
<dbReference type="InterPro" id="IPR016130">
    <property type="entry name" value="Tyr_Pase_AS"/>
</dbReference>
<dbReference type="InterPro" id="IPR000387">
    <property type="entry name" value="Tyr_Pase_dom"/>
</dbReference>
<dbReference type="InterPro" id="IPR020422">
    <property type="entry name" value="TYR_PHOSPHATASE_DUAL_dom"/>
</dbReference>
<dbReference type="PANTHER" id="PTHR45682">
    <property type="entry name" value="AGAP008228-PA"/>
    <property type="match status" value="1"/>
</dbReference>
<dbReference type="PANTHER" id="PTHR45682:SF6">
    <property type="entry name" value="DUAL SPECIFICITY PHOSPHATASE 29"/>
    <property type="match status" value="1"/>
</dbReference>
<dbReference type="Pfam" id="PF00782">
    <property type="entry name" value="DSPc"/>
    <property type="match status" value="1"/>
</dbReference>
<dbReference type="PRINTS" id="PR01908">
    <property type="entry name" value="ADSPHPHTASE"/>
</dbReference>
<dbReference type="PRINTS" id="PR01909">
    <property type="entry name" value="ADSPHPHTASEA"/>
</dbReference>
<dbReference type="SMART" id="SM00195">
    <property type="entry name" value="DSPc"/>
    <property type="match status" value="1"/>
</dbReference>
<dbReference type="SUPFAM" id="SSF52799">
    <property type="entry name" value="(Phosphotyrosine protein) phosphatases II"/>
    <property type="match status" value="1"/>
</dbReference>
<dbReference type="PROSITE" id="PS00383">
    <property type="entry name" value="TYR_PHOSPHATASE_1"/>
    <property type="match status" value="1"/>
</dbReference>
<dbReference type="PROSITE" id="PS50056">
    <property type="entry name" value="TYR_PHOSPHATASE_2"/>
    <property type="match status" value="1"/>
</dbReference>
<dbReference type="PROSITE" id="PS50054">
    <property type="entry name" value="TYR_PHOSPHATASE_DUAL"/>
    <property type="match status" value="1"/>
</dbReference>
<accession>P0C598</accession>
<proteinExistence type="inferred from homology"/>
<organism>
    <name type="scientific">Anolis carolinensis</name>
    <name type="common">Green anole</name>
    <name type="synonym">American chameleon</name>
    <dbReference type="NCBI Taxonomy" id="28377"/>
    <lineage>
        <taxon>Eukaryota</taxon>
        <taxon>Metazoa</taxon>
        <taxon>Chordata</taxon>
        <taxon>Craniata</taxon>
        <taxon>Vertebrata</taxon>
        <taxon>Euteleostomi</taxon>
        <taxon>Lepidosauria</taxon>
        <taxon>Squamata</taxon>
        <taxon>Bifurcata</taxon>
        <taxon>Unidentata</taxon>
        <taxon>Episquamata</taxon>
        <taxon>Toxicofera</taxon>
        <taxon>Iguania</taxon>
        <taxon>Dactyloidae</taxon>
        <taxon>Anolis</taxon>
    </lineage>
</organism>
<feature type="chain" id="PRO_0000295884" description="Dual specificity phosphatase 29">
    <location>
        <begin position="1"/>
        <end position="217"/>
    </location>
</feature>
<feature type="domain" description="Tyrosine-protein phosphatase" evidence="3">
    <location>
        <begin position="46"/>
        <end position="194"/>
    </location>
</feature>
<feature type="active site" description="Phosphocysteine intermediate" evidence="3">
    <location>
        <position position="139"/>
    </location>
</feature>
<feature type="binding site" evidence="1">
    <location>
        <begin position="138"/>
        <end position="145"/>
    </location>
    <ligand>
        <name>substrate</name>
    </ligand>
</feature>